<proteinExistence type="evidence at transcript level"/>
<reference key="1">
    <citation type="journal article" date="2000" name="Nature">
        <title>Sequence and analysis of chromosome 3 of the plant Arabidopsis thaliana.</title>
        <authorList>
            <person name="Salanoubat M."/>
            <person name="Lemcke K."/>
            <person name="Rieger M."/>
            <person name="Ansorge W."/>
            <person name="Unseld M."/>
            <person name="Fartmann B."/>
            <person name="Valle G."/>
            <person name="Bloecker H."/>
            <person name="Perez-Alonso M."/>
            <person name="Obermaier B."/>
            <person name="Delseny M."/>
            <person name="Boutry M."/>
            <person name="Grivell L.A."/>
            <person name="Mache R."/>
            <person name="Puigdomenech P."/>
            <person name="De Simone V."/>
            <person name="Choisne N."/>
            <person name="Artiguenave F."/>
            <person name="Robert C."/>
            <person name="Brottier P."/>
            <person name="Wincker P."/>
            <person name="Cattolico L."/>
            <person name="Weissenbach J."/>
            <person name="Saurin W."/>
            <person name="Quetier F."/>
            <person name="Schaefer M."/>
            <person name="Mueller-Auer S."/>
            <person name="Gabel C."/>
            <person name="Fuchs M."/>
            <person name="Benes V."/>
            <person name="Wurmbach E."/>
            <person name="Drzonek H."/>
            <person name="Erfle H."/>
            <person name="Jordan N."/>
            <person name="Bangert S."/>
            <person name="Wiedelmann R."/>
            <person name="Kranz H."/>
            <person name="Voss H."/>
            <person name="Holland R."/>
            <person name="Brandt P."/>
            <person name="Nyakatura G."/>
            <person name="Vezzi A."/>
            <person name="D'Angelo M."/>
            <person name="Pallavicini A."/>
            <person name="Toppo S."/>
            <person name="Simionati B."/>
            <person name="Conrad A."/>
            <person name="Hornischer K."/>
            <person name="Kauer G."/>
            <person name="Loehnert T.-H."/>
            <person name="Nordsiek G."/>
            <person name="Reichelt J."/>
            <person name="Scharfe M."/>
            <person name="Schoen O."/>
            <person name="Bargues M."/>
            <person name="Terol J."/>
            <person name="Climent J."/>
            <person name="Navarro P."/>
            <person name="Collado C."/>
            <person name="Perez-Perez A."/>
            <person name="Ottenwaelder B."/>
            <person name="Duchemin D."/>
            <person name="Cooke R."/>
            <person name="Laudie M."/>
            <person name="Berger-Llauro C."/>
            <person name="Purnelle B."/>
            <person name="Masuy D."/>
            <person name="de Haan M."/>
            <person name="Maarse A.C."/>
            <person name="Alcaraz J.-P."/>
            <person name="Cottet A."/>
            <person name="Casacuberta E."/>
            <person name="Monfort A."/>
            <person name="Argiriou A."/>
            <person name="Flores M."/>
            <person name="Liguori R."/>
            <person name="Vitale D."/>
            <person name="Mannhaupt G."/>
            <person name="Haase D."/>
            <person name="Schoof H."/>
            <person name="Rudd S."/>
            <person name="Zaccaria P."/>
            <person name="Mewes H.-W."/>
            <person name="Mayer K.F.X."/>
            <person name="Kaul S."/>
            <person name="Town C.D."/>
            <person name="Koo H.L."/>
            <person name="Tallon L.J."/>
            <person name="Jenkins J."/>
            <person name="Rooney T."/>
            <person name="Rizzo M."/>
            <person name="Walts A."/>
            <person name="Utterback T."/>
            <person name="Fujii C.Y."/>
            <person name="Shea T.P."/>
            <person name="Creasy T.H."/>
            <person name="Haas B."/>
            <person name="Maiti R."/>
            <person name="Wu D."/>
            <person name="Peterson J."/>
            <person name="Van Aken S."/>
            <person name="Pai G."/>
            <person name="Militscher J."/>
            <person name="Sellers P."/>
            <person name="Gill J.E."/>
            <person name="Feldblyum T.V."/>
            <person name="Preuss D."/>
            <person name="Lin X."/>
            <person name="Nierman W.C."/>
            <person name="Salzberg S.L."/>
            <person name="White O."/>
            <person name="Venter J.C."/>
            <person name="Fraser C.M."/>
            <person name="Kaneko T."/>
            <person name="Nakamura Y."/>
            <person name="Sato S."/>
            <person name="Kato T."/>
            <person name="Asamizu E."/>
            <person name="Sasamoto S."/>
            <person name="Kimura T."/>
            <person name="Idesawa K."/>
            <person name="Kawashima K."/>
            <person name="Kishida Y."/>
            <person name="Kiyokawa C."/>
            <person name="Kohara M."/>
            <person name="Matsumoto M."/>
            <person name="Matsuno A."/>
            <person name="Muraki A."/>
            <person name="Nakayama S."/>
            <person name="Nakazaki N."/>
            <person name="Shinpo S."/>
            <person name="Takeuchi C."/>
            <person name="Wada T."/>
            <person name="Watanabe A."/>
            <person name="Yamada M."/>
            <person name="Yasuda M."/>
            <person name="Tabata S."/>
        </authorList>
    </citation>
    <scope>NUCLEOTIDE SEQUENCE [LARGE SCALE GENOMIC DNA]</scope>
    <source>
        <strain>cv. Columbia</strain>
    </source>
</reference>
<reference key="2">
    <citation type="journal article" date="2017" name="Plant J.">
        <title>Araport11: a complete reannotation of the Arabidopsis thaliana reference genome.</title>
        <authorList>
            <person name="Cheng C.Y."/>
            <person name="Krishnakumar V."/>
            <person name="Chan A.P."/>
            <person name="Thibaud-Nissen F."/>
            <person name="Schobel S."/>
            <person name="Town C.D."/>
        </authorList>
    </citation>
    <scope>GENOME REANNOTATION</scope>
    <source>
        <strain>cv. Columbia</strain>
    </source>
</reference>
<reference key="3">
    <citation type="journal article" date="2005" name="Plant Physiol.">
        <title>Analysis of the cDNAs of hypothetical genes on Arabidopsis chromosome 2 reveals numerous transcript variants.</title>
        <authorList>
            <person name="Xiao Y.-L."/>
            <person name="Smith S.R."/>
            <person name="Ishmael N."/>
            <person name="Redman J.C."/>
            <person name="Kumar N."/>
            <person name="Monaghan E.L."/>
            <person name="Ayele M."/>
            <person name="Haas B.J."/>
            <person name="Wu H.C."/>
            <person name="Town C.D."/>
        </authorList>
    </citation>
    <scope>NUCLEOTIDE SEQUENCE [LARGE SCALE MRNA] (ISOFORMS 1 AND 2)</scope>
    <source>
        <strain>cv. Columbia</strain>
    </source>
</reference>
<reference key="4">
    <citation type="submission" date="2005-02" db="EMBL/GenBank/DDBJ databases">
        <authorList>
            <person name="Underwood B.A."/>
            <person name="Xiao Y.-L."/>
            <person name="Moskal W.A. Jr."/>
            <person name="Monaghan E.L."/>
            <person name="Wang W."/>
            <person name="Redman J.C."/>
            <person name="Wu H.C."/>
            <person name="Utterback T."/>
            <person name="Town C.D."/>
        </authorList>
    </citation>
    <scope>NUCLEOTIDE SEQUENCE [LARGE SCALE MRNA] (ISOFORM 1)</scope>
    <source>
        <strain>cv. Columbia</strain>
    </source>
</reference>
<keyword id="KW-0025">Alternative splicing</keyword>
<keyword id="KW-1185">Reference proteome</keyword>
<feature type="chain" id="PRO_0000363118" description="UPF0725 protein At3g57210">
    <location>
        <begin position="1"/>
        <end position="158"/>
    </location>
</feature>
<feature type="splice variant" id="VSP_036244" description="In isoform 2." evidence="1">
    <location>
        <begin position="1"/>
        <end position="49"/>
    </location>
</feature>
<feature type="sequence conflict" description="In Ref. 3; AAT67583." evidence="2" ref="3">
    <original>TM</original>
    <variation>KG</variation>
    <location>
        <begin position="115"/>
        <end position="116"/>
    </location>
</feature>
<organism>
    <name type="scientific">Arabidopsis thaliana</name>
    <name type="common">Mouse-ear cress</name>
    <dbReference type="NCBI Taxonomy" id="3702"/>
    <lineage>
        <taxon>Eukaryota</taxon>
        <taxon>Viridiplantae</taxon>
        <taxon>Streptophyta</taxon>
        <taxon>Embryophyta</taxon>
        <taxon>Tracheophyta</taxon>
        <taxon>Spermatophyta</taxon>
        <taxon>Magnoliopsida</taxon>
        <taxon>eudicotyledons</taxon>
        <taxon>Gunneridae</taxon>
        <taxon>Pentapetalae</taxon>
        <taxon>rosids</taxon>
        <taxon>malvids</taxon>
        <taxon>Brassicales</taxon>
        <taxon>Brassicaceae</taxon>
        <taxon>Camelineae</taxon>
        <taxon>Arabidopsis</taxon>
    </lineage>
</organism>
<sequence>MQPSSGRRFTFQTSVYEEACGRLVLTSFIAERRRPGTIIKTSLEREFYRMGSLPEFPLENPFENRNRFYVVDDESELRANDWIRLYLELSVAISDRTTTDHDLSGLRIVSVAIQTMEPPSESSLTAKNATVYIRYIDFCKARCGQNLDRIAVVRRNLQ</sequence>
<dbReference type="EMBL" id="AL137080">
    <property type="protein sequence ID" value="CAB68127.1"/>
    <property type="molecule type" value="Genomic_DNA"/>
</dbReference>
<dbReference type="EMBL" id="CP002686">
    <property type="protein sequence ID" value="AEE79627.1"/>
    <property type="molecule type" value="Genomic_DNA"/>
</dbReference>
<dbReference type="EMBL" id="AY630783">
    <property type="protein sequence ID" value="AAT67582.1"/>
    <property type="molecule type" value="mRNA"/>
</dbReference>
<dbReference type="EMBL" id="AY630784">
    <property type="protein sequence ID" value="AAT67583.1"/>
    <property type="molecule type" value="mRNA"/>
</dbReference>
<dbReference type="EMBL" id="AY924797">
    <property type="protein sequence ID" value="AAX23872.1"/>
    <property type="molecule type" value="mRNA"/>
</dbReference>
<dbReference type="PIR" id="T45799">
    <property type="entry name" value="T45799"/>
</dbReference>
<dbReference type="RefSeq" id="NP_191280.4">
    <molecule id="Q5BPN1-1"/>
    <property type="nucleotide sequence ID" value="NM_115581.4"/>
</dbReference>
<dbReference type="SMR" id="Q5BPN1"/>
<dbReference type="iPTMnet" id="Q5BPN1"/>
<dbReference type="PaxDb" id="3702-AT3G57210.1"/>
<dbReference type="EnsemblPlants" id="AT3G57210.1">
    <molecule id="Q5BPN1-1"/>
    <property type="protein sequence ID" value="AT3G57210.1"/>
    <property type="gene ID" value="AT3G57210"/>
</dbReference>
<dbReference type="GeneID" id="824888"/>
<dbReference type="Gramene" id="AT3G57210.1">
    <molecule id="Q5BPN1-1"/>
    <property type="protein sequence ID" value="AT3G57210.1"/>
    <property type="gene ID" value="AT3G57210"/>
</dbReference>
<dbReference type="KEGG" id="ath:AT3G57210"/>
<dbReference type="Araport" id="AT3G57210"/>
<dbReference type="TAIR" id="AT3G57210"/>
<dbReference type="HOGENOM" id="CLU_053767_0_2_1"/>
<dbReference type="InParanoid" id="Q5BPN1"/>
<dbReference type="OrthoDB" id="1030772at2759"/>
<dbReference type="PhylomeDB" id="Q5BPN1"/>
<dbReference type="PRO" id="PR:Q5BPN1"/>
<dbReference type="Proteomes" id="UP000006548">
    <property type="component" value="Chromosome 3"/>
</dbReference>
<dbReference type="ExpressionAtlas" id="Q5BPN1">
    <property type="expression patterns" value="baseline and differential"/>
</dbReference>
<dbReference type="InterPro" id="IPR006462">
    <property type="entry name" value="MS5"/>
</dbReference>
<dbReference type="NCBIfam" id="TIGR01572">
    <property type="entry name" value="A_thl_para_3677"/>
    <property type="match status" value="1"/>
</dbReference>
<dbReference type="PANTHER" id="PTHR31260:SF28">
    <property type="entry name" value="CYSTATIN DOMAIN PROTEIN"/>
    <property type="match status" value="1"/>
</dbReference>
<dbReference type="PANTHER" id="PTHR31260">
    <property type="entry name" value="CYSTATIN/MONELLIN SUPERFAMILY PROTEIN"/>
    <property type="match status" value="1"/>
</dbReference>
<dbReference type="Pfam" id="PF04776">
    <property type="entry name" value="protein_MS5"/>
    <property type="match status" value="1"/>
</dbReference>
<protein>
    <recommendedName>
        <fullName>UPF0725 protein At3g57210</fullName>
    </recommendedName>
</protein>
<accession>Q5BPN1</accession>
<accession>Q6DYC1</accession>
<accession>Q9M2M6</accession>
<comment type="alternative products">
    <event type="alternative splicing"/>
    <isoform>
        <id>Q5BPN1-1</id>
        <name>1</name>
        <sequence type="displayed"/>
    </isoform>
    <isoform>
        <id>Q5BPN1-2</id>
        <name>2</name>
        <sequence type="described" ref="VSP_036244"/>
    </isoform>
</comment>
<comment type="similarity">
    <text evidence="2">Belongs to the UPF0725 (EMB2204) family.</text>
</comment>
<name>Y3572_ARATH</name>
<gene>
    <name type="ordered locus">At3g57210</name>
    <name type="ORF">F28O9.60</name>
</gene>
<evidence type="ECO:0000303" key="1">
    <source>
    </source>
</evidence>
<evidence type="ECO:0000305" key="2"/>